<sequence length="105" mass="12141">MAEWSGEYISPYAEHGKKSEQVKKITVSIPLKVLKILTDERTRRQVNNLRHATNSELLCEAFLHAFTGQPLPDDADLRKERSDEIPEAAKEIMREMGINPETWEY</sequence>
<name>METJ_SHIB3</name>
<evidence type="ECO:0000255" key="1">
    <source>
        <dbReference type="HAMAP-Rule" id="MF_00744"/>
    </source>
</evidence>
<keyword id="KW-0028">Amino-acid biosynthesis</keyword>
<keyword id="KW-0963">Cytoplasm</keyword>
<keyword id="KW-0238">DNA-binding</keyword>
<keyword id="KW-0486">Methionine biosynthesis</keyword>
<keyword id="KW-1185">Reference proteome</keyword>
<keyword id="KW-0678">Repressor</keyword>
<keyword id="KW-0804">Transcription</keyword>
<keyword id="KW-0805">Transcription regulation</keyword>
<organism>
    <name type="scientific">Shigella boydii serotype 18 (strain CDC 3083-94 / BS512)</name>
    <dbReference type="NCBI Taxonomy" id="344609"/>
    <lineage>
        <taxon>Bacteria</taxon>
        <taxon>Pseudomonadati</taxon>
        <taxon>Pseudomonadota</taxon>
        <taxon>Gammaproteobacteria</taxon>
        <taxon>Enterobacterales</taxon>
        <taxon>Enterobacteriaceae</taxon>
        <taxon>Shigella</taxon>
    </lineage>
</organism>
<dbReference type="EMBL" id="CP001063">
    <property type="protein sequence ID" value="ACD07701.1"/>
    <property type="molecule type" value="Genomic_DNA"/>
</dbReference>
<dbReference type="RefSeq" id="WP_000852812.1">
    <property type="nucleotide sequence ID" value="NC_010658.1"/>
</dbReference>
<dbReference type="SMR" id="B2TWD5"/>
<dbReference type="STRING" id="344609.SbBS512_E4424"/>
<dbReference type="GeneID" id="93777954"/>
<dbReference type="KEGG" id="sbc:SbBS512_E4424"/>
<dbReference type="HOGENOM" id="CLU_142318_0_0_6"/>
<dbReference type="Proteomes" id="UP000001030">
    <property type="component" value="Chromosome"/>
</dbReference>
<dbReference type="GO" id="GO:0005737">
    <property type="term" value="C:cytoplasm"/>
    <property type="evidence" value="ECO:0007669"/>
    <property type="project" value="UniProtKB-SubCell"/>
</dbReference>
<dbReference type="GO" id="GO:0003677">
    <property type="term" value="F:DNA binding"/>
    <property type="evidence" value="ECO:0007669"/>
    <property type="project" value="UniProtKB-KW"/>
</dbReference>
<dbReference type="GO" id="GO:0003700">
    <property type="term" value="F:DNA-binding transcription factor activity"/>
    <property type="evidence" value="ECO:0007669"/>
    <property type="project" value="InterPro"/>
</dbReference>
<dbReference type="GO" id="GO:0009086">
    <property type="term" value="P:methionine biosynthetic process"/>
    <property type="evidence" value="ECO:0007669"/>
    <property type="project" value="UniProtKB-UniRule"/>
</dbReference>
<dbReference type="GO" id="GO:0045892">
    <property type="term" value="P:negative regulation of DNA-templated transcription"/>
    <property type="evidence" value="ECO:0007669"/>
    <property type="project" value="UniProtKB-UniRule"/>
</dbReference>
<dbReference type="CDD" id="cd00490">
    <property type="entry name" value="Met_repressor_MetJ"/>
    <property type="match status" value="1"/>
</dbReference>
<dbReference type="FunFam" id="1.10.140.10:FF:000001">
    <property type="entry name" value="Met repressor"/>
    <property type="match status" value="1"/>
</dbReference>
<dbReference type="Gene3D" id="1.10.140.10">
    <property type="entry name" value="MET Apo-Repressor, subunit A"/>
    <property type="match status" value="1"/>
</dbReference>
<dbReference type="HAMAP" id="MF_00744">
    <property type="entry name" value="MetJ"/>
    <property type="match status" value="1"/>
</dbReference>
<dbReference type="InterPro" id="IPR002084">
    <property type="entry name" value="Met_repressor_MetJ"/>
</dbReference>
<dbReference type="InterPro" id="IPR023453">
    <property type="entry name" value="Met_repressor_MetJ_dom_sf"/>
</dbReference>
<dbReference type="InterPro" id="IPR010985">
    <property type="entry name" value="Ribbon_hlx_hlx"/>
</dbReference>
<dbReference type="NCBIfam" id="NF003622">
    <property type="entry name" value="PRK05264.1"/>
    <property type="match status" value="1"/>
</dbReference>
<dbReference type="Pfam" id="PF01340">
    <property type="entry name" value="MetJ"/>
    <property type="match status" value="1"/>
</dbReference>
<dbReference type="SUPFAM" id="SSF47598">
    <property type="entry name" value="Ribbon-helix-helix"/>
    <property type="match status" value="1"/>
</dbReference>
<accession>B2TWD5</accession>
<proteinExistence type="inferred from homology"/>
<feature type="chain" id="PRO_1000133223" description="Met repressor">
    <location>
        <begin position="1"/>
        <end position="105"/>
    </location>
</feature>
<reference key="1">
    <citation type="submission" date="2008-05" db="EMBL/GenBank/DDBJ databases">
        <title>Complete sequence of Shigella boydii serotype 18 strain BS512.</title>
        <authorList>
            <person name="Rasko D.A."/>
            <person name="Rosovitz M."/>
            <person name="Maurelli A.T."/>
            <person name="Myers G."/>
            <person name="Seshadri R."/>
            <person name="Cer R."/>
            <person name="Jiang L."/>
            <person name="Ravel J."/>
            <person name="Sebastian Y."/>
        </authorList>
    </citation>
    <scope>NUCLEOTIDE SEQUENCE [LARGE SCALE GENOMIC DNA]</scope>
    <source>
        <strain>CDC 3083-94 / BS512</strain>
    </source>
</reference>
<comment type="function">
    <text evidence="1">This regulatory protein, when combined with SAM (S-adenosylmethionine) represses the expression of the methionine regulon and of enzymes involved in SAM synthesis.</text>
</comment>
<comment type="subunit">
    <text evidence="1">Homodimer.</text>
</comment>
<comment type="subcellular location">
    <subcellularLocation>
        <location evidence="1">Cytoplasm</location>
    </subcellularLocation>
</comment>
<comment type="domain">
    <text>Does not bind DNA by a helix-turn-helix motif.</text>
</comment>
<comment type="similarity">
    <text evidence="1">Belongs to the MetJ family.</text>
</comment>
<gene>
    <name evidence="1" type="primary">metJ</name>
    <name type="ordered locus">SbBS512_E4424</name>
</gene>
<protein>
    <recommendedName>
        <fullName evidence="1">Met repressor</fullName>
    </recommendedName>
    <alternativeName>
        <fullName evidence="1">Met regulon regulatory protein MetJ</fullName>
    </alternativeName>
</protein>